<gene>
    <name evidence="1" type="primary">adk</name>
    <name type="ordered locus">IL1845</name>
</gene>
<dbReference type="EC" id="2.7.4.3" evidence="1"/>
<dbReference type="EMBL" id="AE017340">
    <property type="protein sequence ID" value="AAV82677.1"/>
    <property type="molecule type" value="Genomic_DNA"/>
</dbReference>
<dbReference type="RefSeq" id="WP_011235077.1">
    <property type="nucleotide sequence ID" value="NC_006512.1"/>
</dbReference>
<dbReference type="SMR" id="Q5QWR3"/>
<dbReference type="STRING" id="283942.IL1845"/>
<dbReference type="GeneID" id="41337029"/>
<dbReference type="KEGG" id="ilo:IL1845"/>
<dbReference type="eggNOG" id="COG0563">
    <property type="taxonomic scope" value="Bacteria"/>
</dbReference>
<dbReference type="HOGENOM" id="CLU_032354_1_2_6"/>
<dbReference type="OrthoDB" id="9805030at2"/>
<dbReference type="UniPathway" id="UPA00588">
    <property type="reaction ID" value="UER00649"/>
</dbReference>
<dbReference type="Proteomes" id="UP000001171">
    <property type="component" value="Chromosome"/>
</dbReference>
<dbReference type="GO" id="GO:0005737">
    <property type="term" value="C:cytoplasm"/>
    <property type="evidence" value="ECO:0007669"/>
    <property type="project" value="UniProtKB-SubCell"/>
</dbReference>
<dbReference type="GO" id="GO:0004017">
    <property type="term" value="F:adenylate kinase activity"/>
    <property type="evidence" value="ECO:0007669"/>
    <property type="project" value="UniProtKB-UniRule"/>
</dbReference>
<dbReference type="GO" id="GO:0005524">
    <property type="term" value="F:ATP binding"/>
    <property type="evidence" value="ECO:0007669"/>
    <property type="project" value="UniProtKB-UniRule"/>
</dbReference>
<dbReference type="GO" id="GO:0044209">
    <property type="term" value="P:AMP salvage"/>
    <property type="evidence" value="ECO:0007669"/>
    <property type="project" value="UniProtKB-UniRule"/>
</dbReference>
<dbReference type="CDD" id="cd01428">
    <property type="entry name" value="ADK"/>
    <property type="match status" value="1"/>
</dbReference>
<dbReference type="FunFam" id="3.40.50.300:FF:000106">
    <property type="entry name" value="Adenylate kinase mitochondrial"/>
    <property type="match status" value="1"/>
</dbReference>
<dbReference type="Gene3D" id="3.40.50.300">
    <property type="entry name" value="P-loop containing nucleotide triphosphate hydrolases"/>
    <property type="match status" value="1"/>
</dbReference>
<dbReference type="HAMAP" id="MF_00235">
    <property type="entry name" value="Adenylate_kinase_Adk"/>
    <property type="match status" value="1"/>
</dbReference>
<dbReference type="InterPro" id="IPR006259">
    <property type="entry name" value="Adenyl_kin_sub"/>
</dbReference>
<dbReference type="InterPro" id="IPR000850">
    <property type="entry name" value="Adenylat/UMP-CMP_kin"/>
</dbReference>
<dbReference type="InterPro" id="IPR033690">
    <property type="entry name" value="Adenylat_kinase_CS"/>
</dbReference>
<dbReference type="InterPro" id="IPR007862">
    <property type="entry name" value="Adenylate_kinase_lid-dom"/>
</dbReference>
<dbReference type="InterPro" id="IPR027417">
    <property type="entry name" value="P-loop_NTPase"/>
</dbReference>
<dbReference type="NCBIfam" id="TIGR01351">
    <property type="entry name" value="adk"/>
    <property type="match status" value="1"/>
</dbReference>
<dbReference type="NCBIfam" id="NF001379">
    <property type="entry name" value="PRK00279.1-1"/>
    <property type="match status" value="1"/>
</dbReference>
<dbReference type="NCBIfam" id="NF001380">
    <property type="entry name" value="PRK00279.1-2"/>
    <property type="match status" value="1"/>
</dbReference>
<dbReference type="NCBIfam" id="NF001381">
    <property type="entry name" value="PRK00279.1-3"/>
    <property type="match status" value="1"/>
</dbReference>
<dbReference type="NCBIfam" id="NF011100">
    <property type="entry name" value="PRK14527.1"/>
    <property type="match status" value="1"/>
</dbReference>
<dbReference type="PANTHER" id="PTHR23359">
    <property type="entry name" value="NUCLEOTIDE KINASE"/>
    <property type="match status" value="1"/>
</dbReference>
<dbReference type="Pfam" id="PF00406">
    <property type="entry name" value="ADK"/>
    <property type="match status" value="1"/>
</dbReference>
<dbReference type="Pfam" id="PF05191">
    <property type="entry name" value="ADK_lid"/>
    <property type="match status" value="1"/>
</dbReference>
<dbReference type="PRINTS" id="PR00094">
    <property type="entry name" value="ADENYLTKNASE"/>
</dbReference>
<dbReference type="SUPFAM" id="SSF52540">
    <property type="entry name" value="P-loop containing nucleoside triphosphate hydrolases"/>
    <property type="match status" value="1"/>
</dbReference>
<dbReference type="PROSITE" id="PS00113">
    <property type="entry name" value="ADENYLATE_KINASE"/>
    <property type="match status" value="1"/>
</dbReference>
<keyword id="KW-0067">ATP-binding</keyword>
<keyword id="KW-0963">Cytoplasm</keyword>
<keyword id="KW-0418">Kinase</keyword>
<keyword id="KW-0545">Nucleotide biosynthesis</keyword>
<keyword id="KW-0547">Nucleotide-binding</keyword>
<keyword id="KW-1185">Reference proteome</keyword>
<keyword id="KW-0808">Transferase</keyword>
<evidence type="ECO:0000255" key="1">
    <source>
        <dbReference type="HAMAP-Rule" id="MF_00235"/>
    </source>
</evidence>
<evidence type="ECO:0000256" key="2">
    <source>
        <dbReference type="SAM" id="MobiDB-lite"/>
    </source>
</evidence>
<reference key="1">
    <citation type="journal article" date="2004" name="Proc. Natl. Acad. Sci. U.S.A.">
        <title>Genome sequence of the deep-sea gamma-proteobacterium Idiomarina loihiensis reveals amino acid fermentation as a source of carbon and energy.</title>
        <authorList>
            <person name="Hou S."/>
            <person name="Saw J.H."/>
            <person name="Lee K.S."/>
            <person name="Freitas T.A."/>
            <person name="Belisle C."/>
            <person name="Kawarabayasi Y."/>
            <person name="Donachie S.P."/>
            <person name="Pikina A."/>
            <person name="Galperin M.Y."/>
            <person name="Koonin E.V."/>
            <person name="Makarova K.S."/>
            <person name="Omelchenko M.V."/>
            <person name="Sorokin A."/>
            <person name="Wolf Y.I."/>
            <person name="Li Q.X."/>
            <person name="Keum Y.S."/>
            <person name="Campbell S."/>
            <person name="Denery J."/>
            <person name="Aizawa S."/>
            <person name="Shibata S."/>
            <person name="Malahoff A."/>
            <person name="Alam M."/>
        </authorList>
    </citation>
    <scope>NUCLEOTIDE SEQUENCE [LARGE SCALE GENOMIC DNA]</scope>
    <source>
        <strain>ATCC BAA-735 / DSM 15497 / L2-TR</strain>
    </source>
</reference>
<protein>
    <recommendedName>
        <fullName evidence="1">Adenylate kinase</fullName>
        <shortName evidence="1">AK</shortName>
        <ecNumber evidence="1">2.7.4.3</ecNumber>
    </recommendedName>
    <alternativeName>
        <fullName evidence="1">ATP-AMP transphosphorylase</fullName>
    </alternativeName>
    <alternativeName>
        <fullName evidence="1">ATP:AMP phosphotransferase</fullName>
    </alternativeName>
    <alternativeName>
        <fullName evidence="1">Adenylate monophosphate kinase</fullName>
    </alternativeName>
</protein>
<sequence>MRIILLGAPGAGKGTQAQFLMNTFGIPQISTGDMLRSAIKSGSELGKKAKQVMDAGQLVSDDIIIELVKERIAEPDCQNGFLLDGFPRTIPQADAMRDNGIEIDYVLEFDVPDEIIVDRMSGRRVHPGSGRVYHVEHNPPKVEGKDDETGEDLVVRPDDQEQTVRKRLSVYHEQTEPLVEYYQKLSEEGKTEYHKIDGTQPVERVSEQLGDLLRK</sequence>
<feature type="chain" id="PRO_1000021730" description="Adenylate kinase">
    <location>
        <begin position="1"/>
        <end position="215"/>
    </location>
</feature>
<feature type="region of interest" description="NMP" evidence="1">
    <location>
        <begin position="30"/>
        <end position="59"/>
    </location>
</feature>
<feature type="region of interest" description="LID" evidence="1">
    <location>
        <begin position="122"/>
        <end position="159"/>
    </location>
</feature>
<feature type="region of interest" description="Disordered" evidence="2">
    <location>
        <begin position="128"/>
        <end position="151"/>
    </location>
</feature>
<feature type="region of interest" description="Disordered" evidence="2">
    <location>
        <begin position="195"/>
        <end position="215"/>
    </location>
</feature>
<feature type="compositionally biased region" description="Basic and acidic residues" evidence="2">
    <location>
        <begin position="133"/>
        <end position="144"/>
    </location>
</feature>
<feature type="binding site" evidence="1">
    <location>
        <begin position="10"/>
        <end position="15"/>
    </location>
    <ligand>
        <name>ATP</name>
        <dbReference type="ChEBI" id="CHEBI:30616"/>
    </ligand>
</feature>
<feature type="binding site" evidence="1">
    <location>
        <position position="31"/>
    </location>
    <ligand>
        <name>AMP</name>
        <dbReference type="ChEBI" id="CHEBI:456215"/>
    </ligand>
</feature>
<feature type="binding site" evidence="1">
    <location>
        <position position="36"/>
    </location>
    <ligand>
        <name>AMP</name>
        <dbReference type="ChEBI" id="CHEBI:456215"/>
    </ligand>
</feature>
<feature type="binding site" evidence="1">
    <location>
        <begin position="57"/>
        <end position="59"/>
    </location>
    <ligand>
        <name>AMP</name>
        <dbReference type="ChEBI" id="CHEBI:456215"/>
    </ligand>
</feature>
<feature type="binding site" evidence="1">
    <location>
        <begin position="85"/>
        <end position="88"/>
    </location>
    <ligand>
        <name>AMP</name>
        <dbReference type="ChEBI" id="CHEBI:456215"/>
    </ligand>
</feature>
<feature type="binding site" evidence="1">
    <location>
        <position position="92"/>
    </location>
    <ligand>
        <name>AMP</name>
        <dbReference type="ChEBI" id="CHEBI:456215"/>
    </ligand>
</feature>
<feature type="binding site" evidence="1">
    <location>
        <position position="123"/>
    </location>
    <ligand>
        <name>ATP</name>
        <dbReference type="ChEBI" id="CHEBI:30616"/>
    </ligand>
</feature>
<feature type="binding site" evidence="1">
    <location>
        <begin position="132"/>
        <end position="133"/>
    </location>
    <ligand>
        <name>ATP</name>
        <dbReference type="ChEBI" id="CHEBI:30616"/>
    </ligand>
</feature>
<feature type="binding site" evidence="1">
    <location>
        <position position="156"/>
    </location>
    <ligand>
        <name>AMP</name>
        <dbReference type="ChEBI" id="CHEBI:456215"/>
    </ligand>
</feature>
<feature type="binding site" evidence="1">
    <location>
        <position position="167"/>
    </location>
    <ligand>
        <name>AMP</name>
        <dbReference type="ChEBI" id="CHEBI:456215"/>
    </ligand>
</feature>
<feature type="binding site" evidence="1">
    <location>
        <position position="200"/>
    </location>
    <ligand>
        <name>ATP</name>
        <dbReference type="ChEBI" id="CHEBI:30616"/>
    </ligand>
</feature>
<comment type="function">
    <text evidence="1">Catalyzes the reversible transfer of the terminal phosphate group between ATP and AMP. Plays an important role in cellular energy homeostasis and in adenine nucleotide metabolism.</text>
</comment>
<comment type="catalytic activity">
    <reaction evidence="1">
        <text>AMP + ATP = 2 ADP</text>
        <dbReference type="Rhea" id="RHEA:12973"/>
        <dbReference type="ChEBI" id="CHEBI:30616"/>
        <dbReference type="ChEBI" id="CHEBI:456215"/>
        <dbReference type="ChEBI" id="CHEBI:456216"/>
        <dbReference type="EC" id="2.7.4.3"/>
    </reaction>
</comment>
<comment type="pathway">
    <text evidence="1">Purine metabolism; AMP biosynthesis via salvage pathway; AMP from ADP: step 1/1.</text>
</comment>
<comment type="subunit">
    <text evidence="1">Monomer.</text>
</comment>
<comment type="subcellular location">
    <subcellularLocation>
        <location evidence="1">Cytoplasm</location>
    </subcellularLocation>
</comment>
<comment type="domain">
    <text evidence="1">Consists of three domains, a large central CORE domain and two small peripheral domains, NMPbind and LID, which undergo movements during catalysis. The LID domain closes over the site of phosphoryl transfer upon ATP binding. Assembling and dissambling the active center during each catalytic cycle provides an effective means to prevent ATP hydrolysis.</text>
</comment>
<comment type="similarity">
    <text evidence="1">Belongs to the adenylate kinase family.</text>
</comment>
<proteinExistence type="inferred from homology"/>
<accession>Q5QWR3</accession>
<organism>
    <name type="scientific">Idiomarina loihiensis (strain ATCC BAA-735 / DSM 15497 / L2-TR)</name>
    <dbReference type="NCBI Taxonomy" id="283942"/>
    <lineage>
        <taxon>Bacteria</taxon>
        <taxon>Pseudomonadati</taxon>
        <taxon>Pseudomonadota</taxon>
        <taxon>Gammaproteobacteria</taxon>
        <taxon>Alteromonadales</taxon>
        <taxon>Idiomarinaceae</taxon>
        <taxon>Idiomarina</taxon>
    </lineage>
</organism>
<name>KAD_IDILO</name>